<proteinExistence type="evidence at transcript level"/>
<feature type="chain" id="PRO_0000065170" description="Protein orai">
    <location>
        <begin position="1"/>
        <end position="293"/>
    </location>
</feature>
<feature type="topological domain" description="Cytoplasmic" evidence="2">
    <location>
        <begin position="1"/>
        <end position="122"/>
    </location>
</feature>
<feature type="transmembrane region" description="Helical" evidence="2">
    <location>
        <begin position="123"/>
        <end position="141"/>
    </location>
</feature>
<feature type="topological domain" description="Extracellular" evidence="2">
    <location>
        <begin position="142"/>
        <end position="146"/>
    </location>
</feature>
<feature type="transmembrane region" description="Helical" evidence="2">
    <location>
        <begin position="147"/>
        <end position="167"/>
    </location>
</feature>
<feature type="topological domain" description="Cytoplasmic" evidence="2">
    <location>
        <begin position="168"/>
        <end position="198"/>
    </location>
</feature>
<feature type="transmembrane region" description="Helical" evidence="2">
    <location>
        <begin position="199"/>
        <end position="219"/>
    </location>
</feature>
<feature type="topological domain" description="Extracellular" evidence="2">
    <location>
        <begin position="220"/>
        <end position="230"/>
    </location>
</feature>
<feature type="transmembrane region" description="Helical" evidence="2">
    <location>
        <begin position="231"/>
        <end position="251"/>
    </location>
</feature>
<feature type="topological domain" description="Cytoplasmic" evidence="2">
    <location>
        <begin position="252"/>
        <end position="293"/>
    </location>
</feature>
<feature type="region of interest" description="Disordered" evidence="3">
    <location>
        <begin position="62"/>
        <end position="81"/>
    </location>
</feature>
<accession>Q09232</accession>
<name>ORAI_CAEEL</name>
<sequence length="293" mass="32024">MPRSHDPSRVELLRKEGGLTEKRVSISVEDIRGAVANWKNSGGAGDPITPYPLPQFFLQPPSTAGGGSRNGVGSKEGSVTSLRMPLKKAGDDVDLGHRGELDLSEKYNYDLSRAQLKASSRTSALLAGFAMVCLVELQYDQSTPKPLLIVLGVVTSLLVSVHLLALMMSTCILPYMEATGCTQDSPHIKLKFYIDLSWLFSTCIGLLLFLVEIGVIFYVKFTAVGYPTAGYITTAMLVPVGVVFVVFSYLIHKNRVSHSLGRFKHKVDTMKQFLDVEANLQKSTLAPSTIRDI</sequence>
<protein>
    <recommendedName>
        <fullName>Protein orai</fullName>
    </recommendedName>
    <alternativeName>
        <fullName>Store-operated calcium channel</fullName>
    </alternativeName>
</protein>
<gene>
    <name type="primary">orai-1</name>
    <name type="ORF">C09F5.2</name>
</gene>
<reference key="1">
    <citation type="journal article" date="1998" name="Science">
        <title>Genome sequence of the nematode C. elegans: a platform for investigating biology.</title>
        <authorList>
            <consortium name="The C. elegans sequencing consortium"/>
        </authorList>
    </citation>
    <scope>NUCLEOTIDE SEQUENCE [LARGE SCALE GENOMIC DNA]</scope>
    <source>
        <strain>Bristol N2</strain>
    </source>
</reference>
<reference key="2">
    <citation type="journal article" date="2007" name="Cell Calcium">
        <title>Physiological roles of STIM1 and Orai1 homologs and CRAC channels in the genetic model organism Caenorhabditis elegans.</title>
        <authorList>
            <person name="Strange K."/>
            <person name="Yan X."/>
            <person name="Lorin-Nebel C."/>
            <person name="Xing J."/>
        </authorList>
    </citation>
    <scope>FUNCTION</scope>
    <scope>TISSUE SPECIFICITY</scope>
</reference>
<reference key="3">
    <citation type="journal article" date="2007" name="J. Physiol. (Lond.)">
        <title>CRAC channel activity in C. elegans is mediated by Orai1 and STIM1 homologues and is essential for ovulation and fertility.</title>
        <authorList>
            <person name="Lorin-Nebel C."/>
            <person name="Xing J."/>
            <person name="Yan X."/>
            <person name="Strange K."/>
        </authorList>
    </citation>
    <scope>FUNCTION</scope>
    <scope>TISSUE SPECIFICITY</scope>
    <scope>DISRUPTION PHENOTYPE</scope>
</reference>
<organism>
    <name type="scientific">Caenorhabditis elegans</name>
    <dbReference type="NCBI Taxonomy" id="6239"/>
    <lineage>
        <taxon>Eukaryota</taxon>
        <taxon>Metazoa</taxon>
        <taxon>Ecdysozoa</taxon>
        <taxon>Nematoda</taxon>
        <taxon>Chromadorea</taxon>
        <taxon>Rhabditida</taxon>
        <taxon>Rhabditina</taxon>
        <taxon>Rhabditomorpha</taxon>
        <taxon>Rhabditoidea</taxon>
        <taxon>Rhabditidae</taxon>
        <taxon>Peloderinae</taxon>
        <taxon>Caenorhabditis</taxon>
    </lineage>
</organism>
<evidence type="ECO:0000250" key="1"/>
<evidence type="ECO:0000255" key="2"/>
<evidence type="ECO:0000256" key="3">
    <source>
        <dbReference type="SAM" id="MobiDB-lite"/>
    </source>
</evidence>
<evidence type="ECO:0000269" key="4">
    <source>
    </source>
</evidence>
<evidence type="ECO:0000269" key="5">
    <source>
    </source>
</evidence>
<evidence type="ECO:0000305" key="6"/>
<dbReference type="EMBL" id="FO080475">
    <property type="protein sequence ID" value="CCD63980.1"/>
    <property type="molecule type" value="Genomic_DNA"/>
</dbReference>
<dbReference type="PIR" id="T15476">
    <property type="entry name" value="T15476"/>
</dbReference>
<dbReference type="RefSeq" id="NP_001254834.1">
    <property type="nucleotide sequence ID" value="NM_001267905.5"/>
</dbReference>
<dbReference type="SMR" id="Q09232"/>
<dbReference type="BioGRID" id="40492">
    <property type="interactions" value="1"/>
</dbReference>
<dbReference type="DIP" id="DIP-25585N"/>
<dbReference type="FunCoup" id="Q09232">
    <property type="interactions" value="420"/>
</dbReference>
<dbReference type="IntAct" id="Q09232">
    <property type="interactions" value="1"/>
</dbReference>
<dbReference type="STRING" id="6239.C09F5.2a.1"/>
<dbReference type="PaxDb" id="6239-C09F5.2a"/>
<dbReference type="PeptideAtlas" id="Q09232"/>
<dbReference type="EnsemblMetazoa" id="C09F5.2b.1">
    <property type="protein sequence ID" value="C09F5.2b.1"/>
    <property type="gene ID" value="WBGene00015648"/>
</dbReference>
<dbReference type="GeneID" id="175221"/>
<dbReference type="KEGG" id="cel:CELE_C09F5.2"/>
<dbReference type="AGR" id="WB:WBGene00015648"/>
<dbReference type="CTD" id="175221"/>
<dbReference type="WormBase" id="C09F5.2b">
    <property type="protein sequence ID" value="CE01774"/>
    <property type="gene ID" value="WBGene00015648"/>
    <property type="gene designation" value="orai-1"/>
</dbReference>
<dbReference type="eggNOG" id="KOG4298">
    <property type="taxonomic scope" value="Eukaryota"/>
</dbReference>
<dbReference type="GeneTree" id="ENSGT00390000015354"/>
<dbReference type="HOGENOM" id="CLU_940845_0_0_1"/>
<dbReference type="InParanoid" id="Q09232"/>
<dbReference type="OrthoDB" id="61124at2759"/>
<dbReference type="PhylomeDB" id="Q09232"/>
<dbReference type="PRO" id="PR:Q09232"/>
<dbReference type="Proteomes" id="UP000001940">
    <property type="component" value="Chromosome III"/>
</dbReference>
<dbReference type="Bgee" id="WBGene00015648">
    <property type="expression patterns" value="Expressed in material anatomical entity and 5 other cell types or tissues"/>
</dbReference>
<dbReference type="ExpressionAtlas" id="Q09232">
    <property type="expression patterns" value="baseline and differential"/>
</dbReference>
<dbReference type="GO" id="GO:0016324">
    <property type="term" value="C:apical plasma membrane"/>
    <property type="evidence" value="ECO:0000314"/>
    <property type="project" value="WormBase"/>
</dbReference>
<dbReference type="GO" id="GO:0016323">
    <property type="term" value="C:basolateral plasma membrane"/>
    <property type="evidence" value="ECO:0000314"/>
    <property type="project" value="WormBase"/>
</dbReference>
<dbReference type="GO" id="GO:0016020">
    <property type="term" value="C:membrane"/>
    <property type="evidence" value="ECO:0000318"/>
    <property type="project" value="GO_Central"/>
</dbReference>
<dbReference type="GO" id="GO:0005886">
    <property type="term" value="C:plasma membrane"/>
    <property type="evidence" value="ECO:0000314"/>
    <property type="project" value="UniProtKB"/>
</dbReference>
<dbReference type="GO" id="GO:0005891">
    <property type="term" value="C:voltage-gated calcium channel complex"/>
    <property type="evidence" value="ECO:0000315"/>
    <property type="project" value="UniProtKB"/>
</dbReference>
<dbReference type="GO" id="GO:0015279">
    <property type="term" value="F:store-operated calcium channel activity"/>
    <property type="evidence" value="ECO:0000314"/>
    <property type="project" value="WormBase"/>
</dbReference>
<dbReference type="GO" id="GO:0045087">
    <property type="term" value="P:innate immune response"/>
    <property type="evidence" value="ECO:0007007"/>
    <property type="project" value="WormBase"/>
</dbReference>
<dbReference type="GO" id="GO:0030728">
    <property type="term" value="P:ovulation"/>
    <property type="evidence" value="ECO:0000315"/>
    <property type="project" value="WormBase"/>
</dbReference>
<dbReference type="GO" id="GO:0019953">
    <property type="term" value="P:sexual reproduction"/>
    <property type="evidence" value="ECO:0000315"/>
    <property type="project" value="UniProtKB"/>
</dbReference>
<dbReference type="GO" id="GO:0002115">
    <property type="term" value="P:store-operated calcium entry"/>
    <property type="evidence" value="ECO:0000315"/>
    <property type="project" value="WormBase"/>
</dbReference>
<dbReference type="FunFam" id="1.20.140.140:FF:000003">
    <property type="entry name" value="Protein orai"/>
    <property type="match status" value="1"/>
</dbReference>
<dbReference type="Gene3D" id="1.20.140.140">
    <property type="entry name" value="Calcium release-activated calcium channel protein Orai"/>
    <property type="match status" value="1"/>
</dbReference>
<dbReference type="InterPro" id="IPR012446">
    <property type="entry name" value="CRAC_channel"/>
</dbReference>
<dbReference type="InterPro" id="IPR038350">
    <property type="entry name" value="Orai_sf"/>
</dbReference>
<dbReference type="PANTHER" id="PTHR31501">
    <property type="entry name" value="CALCIUM RELEASE-ACTIVATED CALCIUM CHANNEL PROTEIN 1"/>
    <property type="match status" value="1"/>
</dbReference>
<dbReference type="PANTHER" id="PTHR31501:SF7">
    <property type="entry name" value="CALCIUM RELEASE-ACTIVATED CALCIUM CHANNEL PROTEIN 1"/>
    <property type="match status" value="1"/>
</dbReference>
<dbReference type="Pfam" id="PF07856">
    <property type="entry name" value="Orai-1"/>
    <property type="match status" value="1"/>
</dbReference>
<keyword id="KW-0472">Membrane</keyword>
<keyword id="KW-1185">Reference proteome</keyword>
<keyword id="KW-0812">Transmembrane</keyword>
<keyword id="KW-1133">Transmembrane helix</keyword>
<comment type="function">
    <text evidence="4 5">Ca(2+) release-activated Ca(2+)-like (CRAC-like) channel subunit which mediates Ca(2+) influx and increase in Ca(2+)-selective current by synergy with the Ca(2+) sensor, stim-1. Required for Ca(2+) and IP3-dependent contractile activity of sheath cells and the spermatheca. Affects brood size and somatic cell function.</text>
</comment>
<comment type="subcellular location">
    <subcellularLocation>
        <location evidence="1">Membrane</location>
        <topology evidence="1">Multi-pass membrane protein</topology>
    </subcellularLocation>
</comment>
<comment type="tissue specificity">
    <text evidence="4 5">Expressed in gonad sheath cells, hypodermis, intestine and spermatheca. Coexpressed with stim-1.</text>
</comment>
<comment type="disruption phenotype">
    <text evidence="4">Worms exhibit an inhibition of intestinal Ca(2+) release activated Ca(2+) channel activity but has no effect on the initiation of posterior body wall muscle contraction, intestinal Ca(2+) oscillations or intestinal ER Ca(2+) store homeostasis. Attenuation also affects sterility and brood size.</text>
</comment>
<comment type="similarity">
    <text evidence="6">Belongs to the Orai family.</text>
</comment>